<name>NHAH_HALAD</name>
<keyword id="KW-0050">Antiport</keyword>
<keyword id="KW-1003">Cell membrane</keyword>
<keyword id="KW-0406">Ion transport</keyword>
<keyword id="KW-0472">Membrane</keyword>
<keyword id="KW-0915">Sodium</keyword>
<keyword id="KW-0739">Sodium transport</keyword>
<keyword id="KW-0812">Transmembrane</keyword>
<keyword id="KW-1133">Transmembrane helix</keyword>
<keyword id="KW-0813">Transport</keyword>
<sequence length="403" mass="43575">MHGFHDVFIQILLLLAISVTVIAIAKLLKEPDSVALVLVGLVLGLTQLPFIEEAESYITQSEVFQATVISLFLPILLGDATLKLPFHHLFSQKKTVMGLAFLGTFISSLTIGAASYFLLDLPLAVAFTFAALMSATDPISVLSIFKSLGVKQKMSTIMEGESLFNDGIAVVLFKIASIYLLTYIEMGWAGLGSGVFMFLKFAVGGALVGLILGYVFSQVIRVYDDYPLEVAFSALLFFGSYFIAEHFHTSGVIAVVVGGFVFGDYGAKIGMSEETKTNLNTFWDSVTLLANALIFLMVGLEIRNIDLAGNWGYIVGAIAIVLVGRTIAVYIGTGWIKELSSKERILINWGGLRGSLSIALALSLPMDFDGREQVLLLTFSVVLFSLIVQGLTLKPVIKKLGLA</sequence>
<reference key="1">
    <citation type="journal article" date="2008" name="J. Microbiol.">
        <title>Cloning and characterization of a Na+/H+ antiporter gene of the moderately halophilic bacterium Halobacillus aidingensis AD-6T.</title>
        <authorList>
            <person name="Zou Y.J."/>
            <person name="Yang L.F."/>
            <person name="Wang L."/>
            <person name="Yang S.S."/>
        </authorList>
    </citation>
    <scope>NUCLEOTIDE SEQUENCE [GENOMIC DNA]</scope>
    <scope>FUNCTION</scope>
    <scope>BIOPHYSICOCHEMICAL PROPERTIES</scope>
    <scope>SUBCELLULAR LOCATION</scope>
    <source>
        <strain>DSM 18198 / JCM 12771 / AD-6</strain>
    </source>
</reference>
<proteinExistence type="evidence at protein level"/>
<gene>
    <name type="primary">nhaH</name>
</gene>
<protein>
    <recommendedName>
        <fullName>Na(+)/H(+) antiporter NhaH</fullName>
    </recommendedName>
    <alternativeName>
        <fullName>Sodium/proton antiporter NhaH</fullName>
    </alternativeName>
</protein>
<evidence type="ECO:0000255" key="1"/>
<evidence type="ECO:0000269" key="2">
    <source>
    </source>
</evidence>
<evidence type="ECO:0000305" key="3"/>
<organism>
    <name type="scientific">Halobacillus aidingensis</name>
    <dbReference type="NCBI Taxonomy" id="240303"/>
    <lineage>
        <taxon>Bacteria</taxon>
        <taxon>Bacillati</taxon>
        <taxon>Bacillota</taxon>
        <taxon>Bacilli</taxon>
        <taxon>Bacillales</taxon>
        <taxon>Bacillaceae</taxon>
        <taxon>Halobacillus</taxon>
    </lineage>
</organism>
<dbReference type="EMBL" id="EU159451">
    <property type="protein sequence ID" value="ABX57744.1"/>
    <property type="molecule type" value="Genomic_DNA"/>
</dbReference>
<dbReference type="RefSeq" id="WP_089651097.1">
    <property type="nucleotide sequence ID" value="NZ_FNIZ01000002.1"/>
</dbReference>
<dbReference type="SMR" id="B0LJC9"/>
<dbReference type="STRING" id="240303.SAMN05421677_102341"/>
<dbReference type="TCDB" id="2.A.36.6.10">
    <property type="family name" value="the monovalent cation:proton antiporter-1 (cpa1) family"/>
</dbReference>
<dbReference type="OrthoDB" id="154752at2"/>
<dbReference type="GO" id="GO:0005886">
    <property type="term" value="C:plasma membrane"/>
    <property type="evidence" value="ECO:0007669"/>
    <property type="project" value="UniProtKB-SubCell"/>
</dbReference>
<dbReference type="GO" id="GO:0015386">
    <property type="term" value="F:potassium:proton antiporter activity"/>
    <property type="evidence" value="ECO:0007669"/>
    <property type="project" value="TreeGrafter"/>
</dbReference>
<dbReference type="GO" id="GO:0015385">
    <property type="term" value="F:sodium:proton antiporter activity"/>
    <property type="evidence" value="ECO:0007669"/>
    <property type="project" value="InterPro"/>
</dbReference>
<dbReference type="GO" id="GO:0051453">
    <property type="term" value="P:regulation of intracellular pH"/>
    <property type="evidence" value="ECO:0007669"/>
    <property type="project" value="TreeGrafter"/>
</dbReference>
<dbReference type="GO" id="GO:0098719">
    <property type="term" value="P:sodium ion import across plasma membrane"/>
    <property type="evidence" value="ECO:0007669"/>
    <property type="project" value="TreeGrafter"/>
</dbReference>
<dbReference type="Gene3D" id="6.10.140.1330">
    <property type="match status" value="1"/>
</dbReference>
<dbReference type="InterPro" id="IPR018422">
    <property type="entry name" value="Cation/H_exchanger_CPA1"/>
</dbReference>
<dbReference type="InterPro" id="IPR006153">
    <property type="entry name" value="Cation/H_exchanger_TM"/>
</dbReference>
<dbReference type="PANTHER" id="PTHR10110:SF195">
    <property type="entry name" value="NA(+)_H(+) ANTIPORTER NHAS2"/>
    <property type="match status" value="1"/>
</dbReference>
<dbReference type="PANTHER" id="PTHR10110">
    <property type="entry name" value="SODIUM/HYDROGEN EXCHANGER"/>
    <property type="match status" value="1"/>
</dbReference>
<dbReference type="Pfam" id="PF00999">
    <property type="entry name" value="Na_H_Exchanger"/>
    <property type="match status" value="1"/>
</dbReference>
<feature type="chain" id="PRO_0000423858" description="Na(+)/H(+) antiporter NhaH">
    <location>
        <begin position="1"/>
        <end position="403"/>
    </location>
</feature>
<feature type="transmembrane region" description="Helical" evidence="1">
    <location>
        <begin position="7"/>
        <end position="27"/>
    </location>
</feature>
<feature type="transmembrane region" description="Helical" evidence="1">
    <location>
        <begin position="34"/>
        <end position="54"/>
    </location>
</feature>
<feature type="transmembrane region" description="Helical" evidence="1">
    <location>
        <begin position="99"/>
        <end position="119"/>
    </location>
</feature>
<feature type="transmembrane region" description="Helical" evidence="1">
    <location>
        <begin position="125"/>
        <end position="145"/>
    </location>
</feature>
<feature type="transmembrane region" description="Helical" evidence="1">
    <location>
        <begin position="168"/>
        <end position="188"/>
    </location>
</feature>
<feature type="transmembrane region" description="Helical" evidence="1">
    <location>
        <begin position="196"/>
        <end position="216"/>
    </location>
</feature>
<feature type="transmembrane region" description="Helical" evidence="1">
    <location>
        <begin position="228"/>
        <end position="245"/>
    </location>
</feature>
<feature type="transmembrane region" description="Helical" evidence="1">
    <location>
        <begin position="250"/>
        <end position="272"/>
    </location>
</feature>
<feature type="transmembrane region" description="Helical" evidence="1">
    <location>
        <begin position="282"/>
        <end position="302"/>
    </location>
</feature>
<feature type="transmembrane region" description="Helical" evidence="1">
    <location>
        <begin position="311"/>
        <end position="331"/>
    </location>
</feature>
<feature type="transmembrane region" description="Helical" evidence="1">
    <location>
        <begin position="345"/>
        <end position="365"/>
    </location>
</feature>
<feature type="transmembrane region" description="Helical" evidence="1">
    <location>
        <begin position="373"/>
        <end position="393"/>
    </location>
</feature>
<accession>B0LJC9</accession>
<comment type="function">
    <text evidence="2">Na(+)/H(+) antiporter that extrudes sodium in exchange for external protons. Can also transport lithium.</text>
</comment>
<comment type="biophysicochemical properties">
    <phDependence>
        <text evidence="2">Optimum pH is 8.0 for sodium and lithium transport. Exhibits Na(+)/H(+) and Li(+)/H(+) antiporter activity between pH 6.5 and 9.5.</text>
    </phDependence>
</comment>
<comment type="subcellular location">
    <subcellularLocation>
        <location evidence="2">Cell membrane</location>
        <topology evidence="2">Multi-pass membrane protein</topology>
    </subcellularLocation>
</comment>
<comment type="similarity">
    <text evidence="3">Belongs to the monovalent cation:proton antiporter 1 (CPA1) transporter (TC 2.A.36) family.</text>
</comment>